<sequence length="402" mass="43749">MGSYSSDDVEVIREAGRAQGLATILAIGTATPPNCVAQADYADYYFRVTKSEHMVDLKEKFKRICEKTAIKKRYLALTEDYLQENPTMCEFMAPSLNARQDLVVTGVPMLGKEAAVKAIDEWGLPKSKITHLIFCTTAGVDMPGADYQLVKLLGLSPSVKRYMLYQQGCAAGGTVLRLAKDLAENNKGSRVLIVCSEITAILFHGPNENHLDSLVAQALFGDGAAALIVGSGPHLAVERPIFEIVSTDQTILPDTEKAMKLHLREGGLTFQLHRDVPLMVAKNIENAAEKALSPLGITDWNSVFWMVHPGGRAILDQVERKLNLKEDKLRASRHVLSEYGNLISACVLFIIDEVRKRSMAEGKSTTGEGLDCGVLFGFGPGMTVETVVLRSVRVTAAVANGN</sequence>
<evidence type="ECO:0000255" key="1">
    <source>
        <dbReference type="PROSITE-ProRule" id="PRU10023"/>
    </source>
</evidence>
<evidence type="ECO:0000269" key="2">
    <source>
    </source>
</evidence>
<evidence type="ECO:0000269" key="3">
    <source ref="3"/>
</evidence>
<evidence type="ECO:0000303" key="4">
    <source>
    </source>
</evidence>
<evidence type="ECO:0000303" key="5">
    <source ref="3"/>
</evidence>
<evidence type="ECO:0000305" key="6"/>
<evidence type="ECO:0007744" key="7">
    <source>
        <dbReference type="PDB" id="1EE0"/>
    </source>
</evidence>
<evidence type="ECO:0007829" key="8">
    <source>
        <dbReference type="PDB" id="1EE0"/>
    </source>
</evidence>
<evidence type="ECO:0007829" key="9">
    <source>
        <dbReference type="PDB" id="1QLV"/>
    </source>
</evidence>
<comment type="function">
    <text evidence="3">Polyketide synthase, which uses acetyl-CoA and two condensation reactions with malonyl-CoA to form triacetic acid lactone (also called methylpyrone), a precursor of phytoalexin. May participate in insect and pathogen resistance.</text>
</comment>
<comment type="catalytic activity">
    <reaction evidence="3">
        <text>2 malonyl-CoA + acetyl-CoA + 2 H(+) = triacetate lactone + 2 CO2 + 3 CoA</text>
        <dbReference type="Rhea" id="RHEA:63068"/>
        <dbReference type="ChEBI" id="CHEBI:15378"/>
        <dbReference type="ChEBI" id="CHEBI:16458"/>
        <dbReference type="ChEBI" id="CHEBI:16526"/>
        <dbReference type="ChEBI" id="CHEBI:57287"/>
        <dbReference type="ChEBI" id="CHEBI:57288"/>
        <dbReference type="ChEBI" id="CHEBI:57384"/>
    </reaction>
    <physiologicalReaction direction="left-to-right" evidence="3">
        <dbReference type="Rhea" id="RHEA:63069"/>
    </physiologicalReaction>
</comment>
<comment type="tissue specificity">
    <text evidence="2">Expressed in both vegetative and reproductive organs (PubMed:7787187). The expression is strong in the leaf, scape (the inflorescence stem) and corolla (both in the ligule and the unpigmented tube), moderate in the bract and carpel, detectable in the root and pappus but not detectable in the stamen (PubMed:7787187).</text>
</comment>
<comment type="similarity">
    <text evidence="6">Belongs to the thiolase-like superfamily. Chalcone/stilbene synthases family.</text>
</comment>
<comment type="caution">
    <text evidence="6">Ref.3 has shown that this is not a chalcone synthase, but a pyrone synthase.</text>
</comment>
<keyword id="KW-0002">3D-structure</keyword>
<keyword id="KW-0012">Acyltransferase</keyword>
<keyword id="KW-0808">Transferase</keyword>
<name>2PS_GERHY</name>
<organism>
    <name type="scientific">Gerbera hybrida</name>
    <name type="common">Daisy</name>
    <dbReference type="NCBI Taxonomy" id="18101"/>
    <lineage>
        <taxon>Eukaryota</taxon>
        <taxon>Viridiplantae</taxon>
        <taxon>Streptophyta</taxon>
        <taxon>Embryophyta</taxon>
        <taxon>Tracheophyta</taxon>
        <taxon>Spermatophyta</taxon>
        <taxon>Magnoliopsida</taxon>
        <taxon>eudicotyledons</taxon>
        <taxon>Gunneridae</taxon>
        <taxon>Pentapetalae</taxon>
        <taxon>asterids</taxon>
        <taxon>campanulids</taxon>
        <taxon>Asterales</taxon>
        <taxon>Asteraceae</taxon>
        <taxon>Mutisioideae</taxon>
        <taxon>Mutisieae</taxon>
        <taxon>Gerbera</taxon>
    </lineage>
</organism>
<gene>
    <name evidence="5" type="primary">2PS</name>
    <name evidence="4" type="synonym">CHS2</name>
</gene>
<proteinExistence type="evidence at protein level"/>
<accession>P48391</accession>
<reference key="1">
    <citation type="journal article" date="1995" name="Plant Mol. Biol.">
        <title>Chalcone synthase-like genes active during corolla development are differentially expressed and encode enzymes with different catalytic properties in Gerbera hybrida (Asteraceae).</title>
        <authorList>
            <person name="Helariutta Y."/>
            <person name="Elomaa P."/>
            <person name="Kotilainen M."/>
            <person name="Griesbach R.J."/>
            <person name="Schroeder J."/>
            <person name="Teeri T.H."/>
        </authorList>
    </citation>
    <scope>NUCLEOTIDE SEQUENCE [MRNA]</scope>
    <scope>TISSUE SPECIFICITY</scope>
    <source>
        <tissue>Corolla</tissue>
    </source>
</reference>
<reference key="2">
    <citation type="submission" date="2001-03" db="EMBL/GenBank/DDBJ databases">
        <authorList>
            <person name="Teeri T.H."/>
        </authorList>
    </citation>
    <scope>SEQUENCE REVISION TO 259</scope>
</reference>
<reference key="3">
    <citation type="journal article" date="1998" name="Nature">
        <title>New pathway to polyketides in plants.</title>
        <authorList>
            <person name="Eckermann S."/>
            <person name="Schroeder G."/>
            <person name="Schmidt J."/>
            <person name="Strack D."/>
            <person name="Edrada R.A."/>
            <person name="Helariutta Y."/>
            <person name="Elomaa P."/>
            <person name="Kotilainen M."/>
            <person name="Kilpelaeinen I."/>
            <person name="Proksch P."/>
            <person name="Teeri T.H."/>
            <person name="Schroeder J."/>
        </authorList>
    </citation>
    <scope>FUNCTION</scope>
    <scope>CATALYTIC ACTIVITY</scope>
</reference>
<reference key="4">
    <citation type="journal article" date="2000" name="Chem. Biol.">
        <title>Structural control of polyketide formation in plant-specific polyketide synthases.</title>
        <authorList>
            <person name="Jez J.M."/>
            <person name="Austin M.B."/>
            <person name="Ferrer J.-L."/>
            <person name="Bowman M.E."/>
            <person name="Schroeder J."/>
            <person name="Noel J.P."/>
        </authorList>
    </citation>
    <scope>X-RAY CRYSTALLOGRAPHY (2.05 ANGSTROMS) IN COMPLEX WITH ACETOACETYL-COA</scope>
</reference>
<dbReference type="EC" id="2.3.1.-" evidence="3"/>
<dbReference type="EMBL" id="Z38097">
    <property type="protein sequence ID" value="CAA86219.2"/>
    <property type="molecule type" value="mRNA"/>
</dbReference>
<dbReference type="PIR" id="S56700">
    <property type="entry name" value="S55465"/>
</dbReference>
<dbReference type="PDB" id="1EE0">
    <property type="method" value="X-ray"/>
    <property type="resolution" value="2.05 A"/>
    <property type="chains" value="A/B=1-402"/>
</dbReference>
<dbReference type="PDB" id="1QLV">
    <property type="method" value="X-ray"/>
    <property type="resolution" value="2.10 A"/>
    <property type="chains" value="A/B=1-402"/>
</dbReference>
<dbReference type="PDBsum" id="1EE0"/>
<dbReference type="PDBsum" id="1QLV"/>
<dbReference type="SMR" id="P48391"/>
<dbReference type="EvolutionaryTrace" id="P48391"/>
<dbReference type="GO" id="GO:0016747">
    <property type="term" value="F:acyltransferase activity, transferring groups other than amino-acyl groups"/>
    <property type="evidence" value="ECO:0007669"/>
    <property type="project" value="InterPro"/>
</dbReference>
<dbReference type="GO" id="GO:0030639">
    <property type="term" value="P:polyketide biosynthetic process"/>
    <property type="evidence" value="ECO:0007669"/>
    <property type="project" value="TreeGrafter"/>
</dbReference>
<dbReference type="CDD" id="cd00831">
    <property type="entry name" value="CHS_like"/>
    <property type="match status" value="1"/>
</dbReference>
<dbReference type="FunFam" id="3.40.47.10:FF:000014">
    <property type="entry name" value="Chalcone synthase 1"/>
    <property type="match status" value="1"/>
</dbReference>
<dbReference type="FunFam" id="3.40.47.10:FF:000025">
    <property type="entry name" value="Chalcone synthase 2"/>
    <property type="match status" value="1"/>
</dbReference>
<dbReference type="Gene3D" id="3.40.47.10">
    <property type="match status" value="2"/>
</dbReference>
<dbReference type="InterPro" id="IPR012328">
    <property type="entry name" value="Chalcone/stilbene_synt_C"/>
</dbReference>
<dbReference type="InterPro" id="IPR001099">
    <property type="entry name" value="Chalcone/stilbene_synt_N"/>
</dbReference>
<dbReference type="InterPro" id="IPR018088">
    <property type="entry name" value="Chalcone/stilbene_synthase_AS"/>
</dbReference>
<dbReference type="InterPro" id="IPR011141">
    <property type="entry name" value="Polyketide_synthase_type-III"/>
</dbReference>
<dbReference type="InterPro" id="IPR016039">
    <property type="entry name" value="Thiolase-like"/>
</dbReference>
<dbReference type="PANTHER" id="PTHR11877">
    <property type="entry name" value="HYDROXYMETHYLGLUTARYL-COA SYNTHASE"/>
    <property type="match status" value="1"/>
</dbReference>
<dbReference type="PANTHER" id="PTHR11877:SF108">
    <property type="entry name" value="POLYKETIDE SYNTHASE, TYPE III, THIOLASE-LIKE PROTEIN-RELATED"/>
    <property type="match status" value="1"/>
</dbReference>
<dbReference type="Pfam" id="PF02797">
    <property type="entry name" value="Chal_sti_synt_C"/>
    <property type="match status" value="1"/>
</dbReference>
<dbReference type="Pfam" id="PF00195">
    <property type="entry name" value="Chal_sti_synt_N"/>
    <property type="match status" value="1"/>
</dbReference>
<dbReference type="PIRSF" id="PIRSF000451">
    <property type="entry name" value="PKS_III"/>
    <property type="match status" value="1"/>
</dbReference>
<dbReference type="SUPFAM" id="SSF53901">
    <property type="entry name" value="Thiolase-like"/>
    <property type="match status" value="2"/>
</dbReference>
<dbReference type="PROSITE" id="PS00441">
    <property type="entry name" value="CHALCONE_SYNTH"/>
    <property type="match status" value="1"/>
</dbReference>
<protein>
    <recommendedName>
        <fullName evidence="5">2-pyrone synthase</fullName>
        <shortName evidence="5">2-PS</shortName>
        <ecNumber evidence="3">2.3.1.-</ecNumber>
    </recommendedName>
    <alternativeName>
        <fullName evidence="5">G2ps1</fullName>
    </alternativeName>
</protein>
<feature type="chain" id="PRO_0000216092" description="2-pyrone synthase">
    <location>
        <begin position="1"/>
        <end position="402"/>
    </location>
</feature>
<feature type="active site" evidence="1">
    <location>
        <position position="169"/>
    </location>
</feature>
<feature type="binding site" evidence="7">
    <location>
        <position position="60"/>
    </location>
    <ligand>
        <name>acetoacetyl-CoA</name>
        <dbReference type="ChEBI" id="CHEBI:57286"/>
    </ligand>
</feature>
<feature type="binding site" evidence="7">
    <location>
        <position position="63"/>
    </location>
    <ligand>
        <name>acetoacetyl-CoA</name>
        <dbReference type="ChEBI" id="CHEBI:57286"/>
    </ligand>
</feature>
<feature type="binding site" evidence="7">
    <location>
        <position position="169"/>
    </location>
    <ligand>
        <name>acetoacetyl-CoA</name>
        <dbReference type="ChEBI" id="CHEBI:57286"/>
    </ligand>
</feature>
<feature type="binding site" evidence="7">
    <location>
        <position position="272"/>
    </location>
    <ligand>
        <name>acetoacetyl-CoA</name>
        <dbReference type="ChEBI" id="CHEBI:57286"/>
    </ligand>
</feature>
<feature type="binding site" evidence="7">
    <location>
        <position position="274"/>
    </location>
    <ligand>
        <name>acetoacetyl-CoA</name>
        <dbReference type="ChEBI" id="CHEBI:57286"/>
    </ligand>
</feature>
<feature type="binding site" evidence="7">
    <location>
        <position position="310"/>
    </location>
    <ligand>
        <name>acetoacetyl-CoA</name>
        <dbReference type="ChEBI" id="CHEBI:57286"/>
    </ligand>
</feature>
<feature type="binding site" evidence="7">
    <location>
        <position position="312"/>
    </location>
    <ligand>
        <name>acetoacetyl-CoA</name>
        <dbReference type="ChEBI" id="CHEBI:57286"/>
    </ligand>
</feature>
<feature type="binding site" evidence="7">
    <location>
        <position position="313"/>
    </location>
    <ligand>
        <name>acetoacetyl-CoA</name>
        <dbReference type="ChEBI" id="CHEBI:57286"/>
    </ligand>
</feature>
<feature type="strand" evidence="8">
    <location>
        <begin position="23"/>
        <end position="30"/>
    </location>
</feature>
<feature type="strand" evidence="8">
    <location>
        <begin position="35"/>
        <end position="37"/>
    </location>
</feature>
<feature type="helix" evidence="8">
    <location>
        <begin position="38"/>
        <end position="48"/>
    </location>
</feature>
<feature type="helix" evidence="8">
    <location>
        <begin position="55"/>
        <end position="67"/>
    </location>
</feature>
<feature type="strand" evidence="8">
    <location>
        <begin position="72"/>
        <end position="74"/>
    </location>
</feature>
<feature type="helix" evidence="8">
    <location>
        <begin position="79"/>
        <end position="84"/>
    </location>
</feature>
<feature type="helix" evidence="8">
    <location>
        <begin position="86"/>
        <end position="89"/>
    </location>
</feature>
<feature type="strand" evidence="9">
    <location>
        <begin position="90"/>
        <end position="94"/>
    </location>
</feature>
<feature type="helix" evidence="8">
    <location>
        <begin position="96"/>
        <end position="122"/>
    </location>
</feature>
<feature type="helix" evidence="8">
    <location>
        <begin position="126"/>
        <end position="128"/>
    </location>
</feature>
<feature type="strand" evidence="8">
    <location>
        <begin position="131"/>
        <end position="135"/>
    </location>
</feature>
<feature type="strand" evidence="8">
    <location>
        <begin position="141"/>
        <end position="143"/>
    </location>
</feature>
<feature type="helix" evidence="8">
    <location>
        <begin position="145"/>
        <end position="153"/>
    </location>
</feature>
<feature type="strand" evidence="8">
    <location>
        <begin position="160"/>
        <end position="164"/>
    </location>
</feature>
<feature type="helix" evidence="8">
    <location>
        <begin position="171"/>
        <end position="185"/>
    </location>
</feature>
<feature type="strand" evidence="8">
    <location>
        <begin position="191"/>
        <end position="197"/>
    </location>
</feature>
<feature type="helix" evidence="8">
    <location>
        <begin position="199"/>
        <end position="202"/>
    </location>
</feature>
<feature type="helix" evidence="8">
    <location>
        <begin position="211"/>
        <end position="216"/>
    </location>
</feature>
<feature type="turn" evidence="8">
    <location>
        <begin position="217"/>
        <end position="219"/>
    </location>
</feature>
<feature type="strand" evidence="8">
    <location>
        <begin position="223"/>
        <end position="232"/>
    </location>
</feature>
<feature type="turn" evidence="8">
    <location>
        <begin position="235"/>
        <end position="237"/>
    </location>
</feature>
<feature type="strand" evidence="8">
    <location>
        <begin position="242"/>
        <end position="251"/>
    </location>
</feature>
<feature type="helix" evidence="8">
    <location>
        <begin position="256"/>
        <end position="258"/>
    </location>
</feature>
<feature type="strand" evidence="8">
    <location>
        <begin position="259"/>
        <end position="264"/>
    </location>
</feature>
<feature type="helix" evidence="8">
    <location>
        <begin position="276"/>
        <end position="292"/>
    </location>
</feature>
<feature type="helix" evidence="8">
    <location>
        <begin position="293"/>
        <end position="295"/>
    </location>
</feature>
<feature type="helix" evidence="8">
    <location>
        <begin position="300"/>
        <end position="302"/>
    </location>
</feature>
<feature type="strand" evidence="8">
    <location>
        <begin position="303"/>
        <end position="307"/>
    </location>
</feature>
<feature type="helix" evidence="8">
    <location>
        <begin position="312"/>
        <end position="321"/>
    </location>
</feature>
<feature type="turn" evidence="8">
    <location>
        <begin position="326"/>
        <end position="329"/>
    </location>
</feature>
<feature type="helix" evidence="8">
    <location>
        <begin position="330"/>
        <end position="339"/>
    </location>
</feature>
<feature type="helix" evidence="8">
    <location>
        <begin position="343"/>
        <end position="345"/>
    </location>
</feature>
<feature type="helix" evidence="8">
    <location>
        <begin position="346"/>
        <end position="360"/>
    </location>
</feature>
<feature type="strand" evidence="8">
    <location>
        <begin position="370"/>
        <end position="379"/>
    </location>
</feature>
<feature type="turn" evidence="8">
    <location>
        <begin position="380"/>
        <end position="382"/>
    </location>
</feature>
<feature type="strand" evidence="8">
    <location>
        <begin position="383"/>
        <end position="391"/>
    </location>
</feature>